<sequence length="102" mass="11670">MGALTKADLAEHLHAELGFSKREAKSMVEAFFEEIRSCLRENEQVKLSGFGNFDLRDKRERPGRNPKTGEEIPISARRVVTFRPGQKLKARVEDFDESKVVH</sequence>
<accession>Q1QWK1</accession>
<gene>
    <name evidence="1" type="primary">ihfA</name>
    <name evidence="1" type="synonym">himA</name>
    <name type="ordered locus">Csal_1805</name>
</gene>
<protein>
    <recommendedName>
        <fullName evidence="1">Integration host factor subunit alpha</fullName>
        <shortName evidence="1">IHF-alpha</shortName>
    </recommendedName>
</protein>
<reference key="1">
    <citation type="journal article" date="2011" name="Stand. Genomic Sci.">
        <title>Complete genome sequence of the halophilic and highly halotolerant Chromohalobacter salexigens type strain (1H11(T)).</title>
        <authorList>
            <person name="Copeland A."/>
            <person name="O'Connor K."/>
            <person name="Lucas S."/>
            <person name="Lapidus A."/>
            <person name="Berry K.W."/>
            <person name="Detter J.C."/>
            <person name="Del Rio T.G."/>
            <person name="Hammon N."/>
            <person name="Dalin E."/>
            <person name="Tice H."/>
            <person name="Pitluck S."/>
            <person name="Bruce D."/>
            <person name="Goodwin L."/>
            <person name="Han C."/>
            <person name="Tapia R."/>
            <person name="Saunders E."/>
            <person name="Schmutz J."/>
            <person name="Brettin T."/>
            <person name="Larimer F."/>
            <person name="Land M."/>
            <person name="Hauser L."/>
            <person name="Vargas C."/>
            <person name="Nieto J.J."/>
            <person name="Kyrpides N.C."/>
            <person name="Ivanova N."/>
            <person name="Goker M."/>
            <person name="Klenk H.P."/>
            <person name="Csonka L.N."/>
            <person name="Woyke T."/>
        </authorList>
    </citation>
    <scope>NUCLEOTIDE SEQUENCE [LARGE SCALE GENOMIC DNA]</scope>
    <source>
        <strain>ATCC BAA-138 / DSM 3043 / CIP 106854 / NCIMB 13768 / 1H11</strain>
    </source>
</reference>
<proteinExistence type="inferred from homology"/>
<keyword id="KW-0233">DNA recombination</keyword>
<keyword id="KW-0238">DNA-binding</keyword>
<keyword id="KW-1185">Reference proteome</keyword>
<keyword id="KW-0804">Transcription</keyword>
<keyword id="KW-0805">Transcription regulation</keyword>
<keyword id="KW-0810">Translation regulation</keyword>
<feature type="chain" id="PRO_0000277723" description="Integration host factor subunit alpha">
    <location>
        <begin position="1"/>
        <end position="102"/>
    </location>
</feature>
<organism>
    <name type="scientific">Chromohalobacter salexigens (strain ATCC BAA-138 / DSM 3043 / CIP 106854 / NCIMB 13768 / 1H11)</name>
    <dbReference type="NCBI Taxonomy" id="290398"/>
    <lineage>
        <taxon>Bacteria</taxon>
        <taxon>Pseudomonadati</taxon>
        <taxon>Pseudomonadota</taxon>
        <taxon>Gammaproteobacteria</taxon>
        <taxon>Oceanospirillales</taxon>
        <taxon>Halomonadaceae</taxon>
        <taxon>Chromohalobacter</taxon>
    </lineage>
</organism>
<evidence type="ECO:0000255" key="1">
    <source>
        <dbReference type="HAMAP-Rule" id="MF_00380"/>
    </source>
</evidence>
<comment type="function">
    <text evidence="1">This protein is one of the two subunits of integration host factor, a specific DNA-binding protein that functions in genetic recombination as well as in transcriptional and translational control.</text>
</comment>
<comment type="subunit">
    <text evidence="1">Heterodimer of an alpha and a beta chain.</text>
</comment>
<comment type="similarity">
    <text evidence="1">Belongs to the bacterial histone-like protein family.</text>
</comment>
<dbReference type="EMBL" id="CP000285">
    <property type="protein sequence ID" value="ABE59157.1"/>
    <property type="molecule type" value="Genomic_DNA"/>
</dbReference>
<dbReference type="RefSeq" id="WP_011507103.1">
    <property type="nucleotide sequence ID" value="NC_007963.1"/>
</dbReference>
<dbReference type="SMR" id="Q1QWK1"/>
<dbReference type="STRING" id="290398.Csal_1805"/>
<dbReference type="GeneID" id="95334518"/>
<dbReference type="KEGG" id="csa:Csal_1805"/>
<dbReference type="eggNOG" id="COG0776">
    <property type="taxonomic scope" value="Bacteria"/>
</dbReference>
<dbReference type="HOGENOM" id="CLU_105066_1_3_6"/>
<dbReference type="OrthoDB" id="9797747at2"/>
<dbReference type="Proteomes" id="UP000000239">
    <property type="component" value="Chromosome"/>
</dbReference>
<dbReference type="GO" id="GO:0005829">
    <property type="term" value="C:cytosol"/>
    <property type="evidence" value="ECO:0007669"/>
    <property type="project" value="TreeGrafter"/>
</dbReference>
<dbReference type="GO" id="GO:0003677">
    <property type="term" value="F:DNA binding"/>
    <property type="evidence" value="ECO:0007669"/>
    <property type="project" value="UniProtKB-UniRule"/>
</dbReference>
<dbReference type="GO" id="GO:0030527">
    <property type="term" value="F:structural constituent of chromatin"/>
    <property type="evidence" value="ECO:0007669"/>
    <property type="project" value="InterPro"/>
</dbReference>
<dbReference type="GO" id="GO:0006310">
    <property type="term" value="P:DNA recombination"/>
    <property type="evidence" value="ECO:0007669"/>
    <property type="project" value="UniProtKB-UniRule"/>
</dbReference>
<dbReference type="GO" id="GO:0009893">
    <property type="term" value="P:positive regulation of metabolic process"/>
    <property type="evidence" value="ECO:0007669"/>
    <property type="project" value="UniProtKB-ARBA"/>
</dbReference>
<dbReference type="GO" id="GO:0006355">
    <property type="term" value="P:regulation of DNA-templated transcription"/>
    <property type="evidence" value="ECO:0007669"/>
    <property type="project" value="UniProtKB-UniRule"/>
</dbReference>
<dbReference type="GO" id="GO:0006417">
    <property type="term" value="P:regulation of translation"/>
    <property type="evidence" value="ECO:0007669"/>
    <property type="project" value="UniProtKB-UniRule"/>
</dbReference>
<dbReference type="CDD" id="cd13835">
    <property type="entry name" value="IHF_A"/>
    <property type="match status" value="1"/>
</dbReference>
<dbReference type="FunFam" id="4.10.520.10:FF:000002">
    <property type="entry name" value="Integration host factor subunit alpha"/>
    <property type="match status" value="1"/>
</dbReference>
<dbReference type="Gene3D" id="4.10.520.10">
    <property type="entry name" value="IHF-like DNA-binding proteins"/>
    <property type="match status" value="1"/>
</dbReference>
<dbReference type="HAMAP" id="MF_00380">
    <property type="entry name" value="IHF_alpha"/>
    <property type="match status" value="1"/>
</dbReference>
<dbReference type="InterPro" id="IPR000119">
    <property type="entry name" value="Hist_DNA-bd"/>
</dbReference>
<dbReference type="InterPro" id="IPR020816">
    <property type="entry name" value="Histone-like_DNA-bd_CS"/>
</dbReference>
<dbReference type="InterPro" id="IPR010992">
    <property type="entry name" value="IHF-like_DNA-bd_dom_sf"/>
</dbReference>
<dbReference type="InterPro" id="IPR005684">
    <property type="entry name" value="IHF_alpha"/>
</dbReference>
<dbReference type="NCBIfam" id="TIGR00987">
    <property type="entry name" value="himA"/>
    <property type="match status" value="1"/>
</dbReference>
<dbReference type="NCBIfam" id="NF001401">
    <property type="entry name" value="PRK00285.1"/>
    <property type="match status" value="1"/>
</dbReference>
<dbReference type="PANTHER" id="PTHR33175">
    <property type="entry name" value="DNA-BINDING PROTEIN HU"/>
    <property type="match status" value="1"/>
</dbReference>
<dbReference type="PANTHER" id="PTHR33175:SF2">
    <property type="entry name" value="INTEGRATION HOST FACTOR SUBUNIT ALPHA"/>
    <property type="match status" value="1"/>
</dbReference>
<dbReference type="Pfam" id="PF00216">
    <property type="entry name" value="Bac_DNA_binding"/>
    <property type="match status" value="1"/>
</dbReference>
<dbReference type="PRINTS" id="PR01727">
    <property type="entry name" value="DNABINDINGHU"/>
</dbReference>
<dbReference type="SMART" id="SM00411">
    <property type="entry name" value="BHL"/>
    <property type="match status" value="1"/>
</dbReference>
<dbReference type="SUPFAM" id="SSF47729">
    <property type="entry name" value="IHF-like DNA-binding proteins"/>
    <property type="match status" value="1"/>
</dbReference>
<dbReference type="PROSITE" id="PS00045">
    <property type="entry name" value="HISTONE_LIKE"/>
    <property type="match status" value="1"/>
</dbReference>
<name>IHFA_CHRSD</name>